<accession>Q889Z2</accession>
<gene>
    <name evidence="1" type="primary">erpA</name>
    <name type="ordered locus">PSPTO_0605</name>
</gene>
<protein>
    <recommendedName>
        <fullName evidence="1">Iron-sulfur cluster insertion protein ErpA</fullName>
    </recommendedName>
</protein>
<sequence>MSVESFTPTALEFTPNAAHKVKTLVDEEGNDRLKLRVFVTGGGCSGFQYGFTFDEDVADDDTIVEREGVSLVVDPMSFQYLAGAEVDYQEGLEGSRFVIKNPNASTTCGCGSSFSI</sequence>
<keyword id="KW-0408">Iron</keyword>
<keyword id="KW-0411">Iron-sulfur</keyword>
<keyword id="KW-0479">Metal-binding</keyword>
<keyword id="KW-1185">Reference proteome</keyword>
<organism>
    <name type="scientific">Pseudomonas syringae pv. tomato (strain ATCC BAA-871 / DC3000)</name>
    <dbReference type="NCBI Taxonomy" id="223283"/>
    <lineage>
        <taxon>Bacteria</taxon>
        <taxon>Pseudomonadati</taxon>
        <taxon>Pseudomonadota</taxon>
        <taxon>Gammaproteobacteria</taxon>
        <taxon>Pseudomonadales</taxon>
        <taxon>Pseudomonadaceae</taxon>
        <taxon>Pseudomonas</taxon>
    </lineage>
</organism>
<name>ERPA_PSESM</name>
<evidence type="ECO:0000255" key="1">
    <source>
        <dbReference type="HAMAP-Rule" id="MF_01380"/>
    </source>
</evidence>
<comment type="function">
    <text evidence="1">Required for insertion of 4Fe-4S clusters for at least IspG.</text>
</comment>
<comment type="cofactor">
    <cofactor evidence="1">
        <name>iron-sulfur cluster</name>
        <dbReference type="ChEBI" id="CHEBI:30408"/>
    </cofactor>
    <text evidence="1">Binds 1 iron-sulfur cluster per subunit.</text>
</comment>
<comment type="subunit">
    <text evidence="1">Homodimer.</text>
</comment>
<comment type="similarity">
    <text evidence="1">Belongs to the HesB/IscA family.</text>
</comment>
<reference key="1">
    <citation type="journal article" date="2003" name="Proc. Natl. Acad. Sci. U.S.A.">
        <title>The complete genome sequence of the Arabidopsis and tomato pathogen Pseudomonas syringae pv. tomato DC3000.</title>
        <authorList>
            <person name="Buell C.R."/>
            <person name="Joardar V."/>
            <person name="Lindeberg M."/>
            <person name="Selengut J."/>
            <person name="Paulsen I.T."/>
            <person name="Gwinn M.L."/>
            <person name="Dodson R.J."/>
            <person name="DeBoy R.T."/>
            <person name="Durkin A.S."/>
            <person name="Kolonay J.F."/>
            <person name="Madupu R."/>
            <person name="Daugherty S.C."/>
            <person name="Brinkac L.M."/>
            <person name="Beanan M.J."/>
            <person name="Haft D.H."/>
            <person name="Nelson W.C."/>
            <person name="Davidsen T.M."/>
            <person name="Zafar N."/>
            <person name="Zhou L."/>
            <person name="Liu J."/>
            <person name="Yuan Q."/>
            <person name="Khouri H.M."/>
            <person name="Fedorova N.B."/>
            <person name="Tran B."/>
            <person name="Russell D."/>
            <person name="Berry K.J."/>
            <person name="Utterback T.R."/>
            <person name="Van Aken S.E."/>
            <person name="Feldblyum T.V."/>
            <person name="D'Ascenzo M."/>
            <person name="Deng W.-L."/>
            <person name="Ramos A.R."/>
            <person name="Alfano J.R."/>
            <person name="Cartinhour S."/>
            <person name="Chatterjee A.K."/>
            <person name="Delaney T.P."/>
            <person name="Lazarowitz S.G."/>
            <person name="Martin G.B."/>
            <person name="Schneider D.J."/>
            <person name="Tang X."/>
            <person name="Bender C.L."/>
            <person name="White O."/>
            <person name="Fraser C.M."/>
            <person name="Collmer A."/>
        </authorList>
    </citation>
    <scope>NUCLEOTIDE SEQUENCE [LARGE SCALE GENOMIC DNA]</scope>
    <source>
        <strain>ATCC BAA-871 / DC3000</strain>
    </source>
</reference>
<dbReference type="EMBL" id="AE016853">
    <property type="protein sequence ID" value="AAO54147.1"/>
    <property type="molecule type" value="Genomic_DNA"/>
</dbReference>
<dbReference type="RefSeq" id="NP_790452.1">
    <property type="nucleotide sequence ID" value="NC_004578.1"/>
</dbReference>
<dbReference type="RefSeq" id="WP_002551953.1">
    <property type="nucleotide sequence ID" value="NC_004578.1"/>
</dbReference>
<dbReference type="SMR" id="Q889Z2"/>
<dbReference type="STRING" id="223283.PSPTO_0605"/>
<dbReference type="GeneID" id="96221059"/>
<dbReference type="KEGG" id="pst:PSPTO_0605"/>
<dbReference type="PATRIC" id="fig|223283.9.peg.610"/>
<dbReference type="eggNOG" id="COG0316">
    <property type="taxonomic scope" value="Bacteria"/>
</dbReference>
<dbReference type="HOGENOM" id="CLU_069054_5_3_6"/>
<dbReference type="OrthoDB" id="9801228at2"/>
<dbReference type="PhylomeDB" id="Q889Z2"/>
<dbReference type="Proteomes" id="UP000002515">
    <property type="component" value="Chromosome"/>
</dbReference>
<dbReference type="GO" id="GO:0005829">
    <property type="term" value="C:cytosol"/>
    <property type="evidence" value="ECO:0007669"/>
    <property type="project" value="TreeGrafter"/>
</dbReference>
<dbReference type="GO" id="GO:0051537">
    <property type="term" value="F:2 iron, 2 sulfur cluster binding"/>
    <property type="evidence" value="ECO:0007669"/>
    <property type="project" value="UniProtKB-ARBA"/>
</dbReference>
<dbReference type="GO" id="GO:0051539">
    <property type="term" value="F:4 iron, 4 sulfur cluster binding"/>
    <property type="evidence" value="ECO:0007669"/>
    <property type="project" value="TreeGrafter"/>
</dbReference>
<dbReference type="GO" id="GO:0005506">
    <property type="term" value="F:iron ion binding"/>
    <property type="evidence" value="ECO:0007669"/>
    <property type="project" value="UniProtKB-UniRule"/>
</dbReference>
<dbReference type="GO" id="GO:0016226">
    <property type="term" value="P:iron-sulfur cluster assembly"/>
    <property type="evidence" value="ECO:0007669"/>
    <property type="project" value="UniProtKB-UniRule"/>
</dbReference>
<dbReference type="FunFam" id="2.60.300.12:FF:000002">
    <property type="entry name" value="Iron-sulfur cluster insertion protein ErpA"/>
    <property type="match status" value="1"/>
</dbReference>
<dbReference type="Gene3D" id="2.60.300.12">
    <property type="entry name" value="HesB-like domain"/>
    <property type="match status" value="1"/>
</dbReference>
<dbReference type="HAMAP" id="MF_01380">
    <property type="entry name" value="Fe_S_insert_ErpA"/>
    <property type="match status" value="1"/>
</dbReference>
<dbReference type="InterPro" id="IPR000361">
    <property type="entry name" value="FeS_biogenesis"/>
</dbReference>
<dbReference type="InterPro" id="IPR016092">
    <property type="entry name" value="FeS_cluster_insertion"/>
</dbReference>
<dbReference type="InterPro" id="IPR017870">
    <property type="entry name" value="FeS_cluster_insertion_CS"/>
</dbReference>
<dbReference type="InterPro" id="IPR023063">
    <property type="entry name" value="FeS_cluster_insertion_RrpA"/>
</dbReference>
<dbReference type="InterPro" id="IPR035903">
    <property type="entry name" value="HesB-like_dom_sf"/>
</dbReference>
<dbReference type="NCBIfam" id="TIGR00049">
    <property type="entry name" value="iron-sulfur cluster assembly accessory protein"/>
    <property type="match status" value="1"/>
</dbReference>
<dbReference type="NCBIfam" id="NF010147">
    <property type="entry name" value="PRK13623.1"/>
    <property type="match status" value="1"/>
</dbReference>
<dbReference type="PANTHER" id="PTHR43011">
    <property type="entry name" value="IRON-SULFUR CLUSTER ASSEMBLY 2 HOMOLOG, MITOCHONDRIAL"/>
    <property type="match status" value="1"/>
</dbReference>
<dbReference type="PANTHER" id="PTHR43011:SF1">
    <property type="entry name" value="IRON-SULFUR CLUSTER ASSEMBLY 2 HOMOLOG, MITOCHONDRIAL"/>
    <property type="match status" value="1"/>
</dbReference>
<dbReference type="Pfam" id="PF01521">
    <property type="entry name" value="Fe-S_biosyn"/>
    <property type="match status" value="1"/>
</dbReference>
<dbReference type="SUPFAM" id="SSF89360">
    <property type="entry name" value="HesB-like domain"/>
    <property type="match status" value="1"/>
</dbReference>
<dbReference type="PROSITE" id="PS01152">
    <property type="entry name" value="HESB"/>
    <property type="match status" value="1"/>
</dbReference>
<feature type="chain" id="PRO_0000311532" description="Iron-sulfur cluster insertion protein ErpA">
    <location>
        <begin position="1"/>
        <end position="116"/>
    </location>
</feature>
<feature type="binding site" evidence="1">
    <location>
        <position position="44"/>
    </location>
    <ligand>
        <name>iron-sulfur cluster</name>
        <dbReference type="ChEBI" id="CHEBI:30408"/>
    </ligand>
</feature>
<feature type="binding site" evidence="1">
    <location>
        <position position="108"/>
    </location>
    <ligand>
        <name>iron-sulfur cluster</name>
        <dbReference type="ChEBI" id="CHEBI:30408"/>
    </ligand>
</feature>
<feature type="binding site" evidence="1">
    <location>
        <position position="110"/>
    </location>
    <ligand>
        <name>iron-sulfur cluster</name>
        <dbReference type="ChEBI" id="CHEBI:30408"/>
    </ligand>
</feature>
<proteinExistence type="inferred from homology"/>